<gene>
    <name evidence="9" type="primary">UBP12</name>
    <name evidence="12" type="ordered locus">At5g06600</name>
    <name evidence="13" type="ORF">F15M7.13</name>
</gene>
<comment type="function">
    <text evidence="1 8">Recognizes and hydrolyzes the peptide bond at the C-terminal Gly of ubiquitin. Involved in the processing of poly-ubiquitin precursors as well as that of ubiquitinated proteins (By similarity). Positive regulator of root meristem development that, together with UBP13, prevents the ubiquitination and turnover of RGFR1 induced by the RGF1 hormone peptide, thus influencing PLT1 and PLT2 expression (PubMed:29339500).</text>
</comment>
<comment type="catalytic activity">
    <reaction evidence="4 5">
        <text>Thiol-dependent hydrolysis of ester, thioester, amide, peptide and isopeptide bonds formed by the C-terminal Gly of ubiquitin (a 76-residue protein attached to proteins as an intracellular targeting signal).</text>
        <dbReference type="EC" id="3.4.19.12"/>
    </reaction>
</comment>
<comment type="subunit">
    <text evidence="7">Interacts with SIC/RON3.</text>
</comment>
<comment type="alternative products">
    <event type="alternative splicing"/>
    <isoform>
        <id>Q9FPT1-1</id>
        <name>1</name>
        <sequence type="displayed"/>
    </isoform>
    <isoform>
        <id>Q9FPT1-2</id>
        <name>2</name>
        <sequence type="described" ref="VSP_029989"/>
    </isoform>
</comment>
<comment type="disruption phenotype">
    <text evidence="8">The double mutant ubp12 ubp13 roots are completely insensitive to exogenous applied hormone peptide RGF1 associated with an accelerated RGF1-induced ubiquitination and turnover of RGFR1 and are characterized by a reduced number of cortical meristem cells and disturbed PLT1 and PLT2 expression.</text>
</comment>
<comment type="miscellaneous">
    <molecule>Isoform 2</molecule>
    <text evidence="11">May be due to a competing acceptor splice site.</text>
</comment>
<comment type="similarity">
    <text evidence="11">Belongs to the peptidase C19 family.</text>
</comment>
<comment type="sequence caution" evidence="11">
    <conflict type="erroneous gene model prediction">
        <sequence resource="EMBL-CDS" id="BAB11409"/>
    </conflict>
</comment>
<protein>
    <recommendedName>
        <fullName evidence="9">Ubiquitin C-terminal hydrolase 12</fullName>
        <ecNumber evidence="4 5">3.4.19.12</ecNumber>
    </recommendedName>
    <alternativeName>
        <fullName evidence="9">Deubiquitinating enzyme 12</fullName>
        <shortName evidence="9">AtUBP12</shortName>
    </alternativeName>
    <alternativeName>
        <fullName evidence="9">Ubiquitin thioesterase 12</fullName>
    </alternativeName>
    <alternativeName>
        <fullName evidence="9">Ubiquitin-specific-processing protease 12</fullName>
    </alternativeName>
</protein>
<proteinExistence type="evidence at protein level"/>
<reference key="1">
    <citation type="journal article" date="2000" name="Plant Physiol.">
        <title>The ubiquitin-specific protease family from Arabidopsis. AtUBP1 and 2 are required for the resistance to the amino acid analog canavanine.</title>
        <authorList>
            <person name="Yan N."/>
            <person name="Doelling J.H."/>
            <person name="Falbel T.G."/>
            <person name="Durski A.M."/>
            <person name="Vierstra R.D."/>
        </authorList>
    </citation>
    <scope>NUCLEOTIDE SEQUENCE [MRNA] (ISOFORM 1)</scope>
    <scope>GENE FAMILY ORGANIZATION</scope>
    <scope>NOMENCLATURE</scope>
    <source>
        <strain>cv. Columbia</strain>
    </source>
</reference>
<reference key="2">
    <citation type="submission" date="2000-06" db="EMBL/GenBank/DDBJ databases">
        <title>Structural analysis of Arabidopsis thaliana chromosome 5. XI.</title>
        <authorList>
            <person name="Kaneko T."/>
            <person name="Katoh T."/>
            <person name="Asamizu E."/>
            <person name="Sato S."/>
            <person name="Nakamura Y."/>
            <person name="Kotani H."/>
            <person name="Tabata S."/>
        </authorList>
    </citation>
    <scope>NUCLEOTIDE SEQUENCE [LARGE SCALE GENOMIC DNA]</scope>
    <source>
        <strain>cv. Columbia</strain>
    </source>
</reference>
<reference key="3">
    <citation type="journal article" date="2017" name="Plant J.">
        <title>Araport11: a complete reannotation of the Arabidopsis thaliana reference genome.</title>
        <authorList>
            <person name="Cheng C.Y."/>
            <person name="Krishnakumar V."/>
            <person name="Chan A.P."/>
            <person name="Thibaud-Nissen F."/>
            <person name="Schobel S."/>
            <person name="Town C.D."/>
        </authorList>
    </citation>
    <scope>GENOME REANNOTATION</scope>
    <source>
        <strain>cv. Columbia</strain>
    </source>
</reference>
<reference key="4">
    <citation type="journal article" date="2003" name="Science">
        <title>Empirical analysis of transcriptional activity in the Arabidopsis genome.</title>
        <authorList>
            <person name="Yamada K."/>
            <person name="Lim J."/>
            <person name="Dale J.M."/>
            <person name="Chen H."/>
            <person name="Shinn P."/>
            <person name="Palm C.J."/>
            <person name="Southwick A.M."/>
            <person name="Wu H.C."/>
            <person name="Kim C.J."/>
            <person name="Nguyen M."/>
            <person name="Pham P.K."/>
            <person name="Cheuk R.F."/>
            <person name="Karlin-Newmann G."/>
            <person name="Liu S.X."/>
            <person name="Lam B."/>
            <person name="Sakano H."/>
            <person name="Wu T."/>
            <person name="Yu G."/>
            <person name="Miranda M."/>
            <person name="Quach H.L."/>
            <person name="Tripp M."/>
            <person name="Chang C.H."/>
            <person name="Lee J.M."/>
            <person name="Toriumi M.J."/>
            <person name="Chan M.M."/>
            <person name="Tang C.C."/>
            <person name="Onodera C.S."/>
            <person name="Deng J.M."/>
            <person name="Akiyama K."/>
            <person name="Ansari Y."/>
            <person name="Arakawa T."/>
            <person name="Banh J."/>
            <person name="Banno F."/>
            <person name="Bowser L."/>
            <person name="Brooks S.Y."/>
            <person name="Carninci P."/>
            <person name="Chao Q."/>
            <person name="Choy N."/>
            <person name="Enju A."/>
            <person name="Goldsmith A.D."/>
            <person name="Gurjal M."/>
            <person name="Hansen N.F."/>
            <person name="Hayashizaki Y."/>
            <person name="Johnson-Hopson C."/>
            <person name="Hsuan V.W."/>
            <person name="Iida K."/>
            <person name="Karnes M."/>
            <person name="Khan S."/>
            <person name="Koesema E."/>
            <person name="Ishida J."/>
            <person name="Jiang P.X."/>
            <person name="Jones T."/>
            <person name="Kawai J."/>
            <person name="Kamiya A."/>
            <person name="Meyers C."/>
            <person name="Nakajima M."/>
            <person name="Narusaka M."/>
            <person name="Seki M."/>
            <person name="Sakurai T."/>
            <person name="Satou M."/>
            <person name="Tamse R."/>
            <person name="Vaysberg M."/>
            <person name="Wallender E.K."/>
            <person name="Wong C."/>
            <person name="Yamamura Y."/>
            <person name="Yuan S."/>
            <person name="Shinozaki K."/>
            <person name="Davis R.W."/>
            <person name="Theologis A."/>
            <person name="Ecker J.R."/>
        </authorList>
    </citation>
    <scope>NUCLEOTIDE SEQUENCE [LARGE SCALE MRNA] (ISOFORM 2)</scope>
    <source>
        <strain>cv. Columbia</strain>
    </source>
</reference>
<reference key="5">
    <citation type="journal article" date="2016" name="Proc. Natl. Acad. Sci. U.S.A.">
        <title>ROTUNDA3 function in plant development by phosphatase 2A-mediated regulation of auxin transporter recycling.</title>
        <authorList>
            <person name="Karampelias M."/>
            <person name="Neyt P."/>
            <person name="De Groeve S."/>
            <person name="Aesaert S."/>
            <person name="Coussens G."/>
            <person name="Rolcik J."/>
            <person name="Bruno L."/>
            <person name="De Winne N."/>
            <person name="Van Minnebruggen A."/>
            <person name="Van Montagu M."/>
            <person name="Ponce M.R."/>
            <person name="Micol J.L."/>
            <person name="Friml J."/>
            <person name="De Jaeger G."/>
            <person name="Van Lijsebettens M."/>
        </authorList>
    </citation>
    <scope>INTERACTION WITH SIC/RON3</scope>
    <source>
        <strain>cv. Columbia</strain>
        <strain>cv. Landsberg erecta</strain>
    </source>
</reference>
<reference key="6">
    <citation type="journal article" date="2018" name="Proc. Natl. Acad. Sci. U.S.A.">
        <title>Regulation of the stability of RGF1 receptor by the ubiquitin-specific proteases UBP12/UBP13 is critical for root meristem maintenance.</title>
        <authorList>
            <person name="An Z."/>
            <person name="Liu Y."/>
            <person name="Ou Y."/>
            <person name="Li J."/>
            <person name="Zhang B."/>
            <person name="Sun D."/>
            <person name="Sun Y."/>
            <person name="Tang W."/>
        </authorList>
    </citation>
    <scope>FUNCTION</scope>
    <scope>DISRUPTION PHENOTYPE</scope>
    <source>
        <strain>cv. Columbia</strain>
    </source>
</reference>
<sequence>MTMMTPPPVDQPEDEEMLVPNSDLVDGPAQPMEVTQPETAASTVENQPAEDPPTLKFTWTIPNFSRQNTRKHYSDVFVVGGYKWRILIFPKGNNVDHLSMYLDVSDAASLPYGWSRYAQFSLAVVNQIHTRYTVRKETQHQFNARESDWGFTSFMPLSELYDPSRGYLVNDTVLVEAEVAVRKVLDYWSYDSKKETGFVGLKNQGATCYMNSLLQTLYHIPYFRKAVYHMPTTENDAPTASIPLALQSLFYKLQYNDTSVATKELTKSFGWDTYDSFMQHDVQELNRVLCEKLEDKMKGTVVEGTIQQLFEGHHMNYIECINVDFKSTRKESFYDLQLDVKGCKDVYASFDKYVEVERLEGDNKYHAEGHGLQDAKKGVLFIDFPPVLQLQLKRFEYDFMRDTMVKINDRYEFPLELDLDREDGKYLSPDADRSVRNLYTLHSVLVHSGGVHGGHYYAFIRPTLSDQWYKFDDERVTKEDLKRALEEQYGGEEELPQTNPGFNNNPPFKFTKYSNAYMLVYIRESDKDKIICNVDEKDIAEHLRVRLKKEQEEKEDKRRYKAQAHLYTIIKVARDEDLKEQIGKDIYFDLVDHDKVRSFRIQKQTPFQQFKEEVAKEFGVPVQLQRFWIWAKRQNHTYRPNRPLTPQEELQPVGQIREASNKANTAELKLFLEVEHLDLRPIPPPEKSKEDILLFFKLYDPEKAVLSYAGRLMVKSSSKPMDITGKLNEMVGFAPDEEIELFEEIKFEPCVMCEHLDKKTSFRLCQIEDGDIICFQKPLVNKEIECLYPAVPSFLEYVQNRQLVRFRALEKPKEDEFVLELSKQHTYDDVVEKVAEKLGLDDPSKLRLTSHNCYSQQPKPQPIKYRGVDHLSDMLVHYNQTSDILYYEVLDIPLPELQGLKTLKVAFHHATKEEVVIHNIRLPKQSTVGDVINELKTKVELSHPDAELRLLEVFYHKIYKIFPSTERIENINDQYWTLRAEEIPEEEKNIGPNDRLILVYHFAKETGQNQQVQNFGEPFFLVIHEGETLEEIKNRIQKKLHVSDEDFAKWKFAFMSMGRPEYLQDTDVVYNRFQRRDVYGAFEQYLGLEHADTTPKRAYAANQNRHAYEKPVKIYN</sequence>
<dbReference type="EC" id="3.4.19.12" evidence="4 5"/>
<dbReference type="EMBL" id="AF302663">
    <property type="protein sequence ID" value="AAG42754.1"/>
    <property type="molecule type" value="mRNA"/>
</dbReference>
<dbReference type="EMBL" id="AP002543">
    <property type="protein sequence ID" value="BAB11409.1"/>
    <property type="status" value="ALT_SEQ"/>
    <property type="molecule type" value="Genomic_DNA"/>
</dbReference>
<dbReference type="EMBL" id="CP002688">
    <property type="protein sequence ID" value="AED91039.1"/>
    <property type="molecule type" value="Genomic_DNA"/>
</dbReference>
<dbReference type="EMBL" id="CP002688">
    <property type="protein sequence ID" value="AED91040.1"/>
    <property type="molecule type" value="Genomic_DNA"/>
</dbReference>
<dbReference type="EMBL" id="AF360198">
    <property type="protein sequence ID" value="AAK25908.1"/>
    <property type="molecule type" value="mRNA"/>
</dbReference>
<dbReference type="EMBL" id="AY142616">
    <property type="protein sequence ID" value="AAN13185.1"/>
    <property type="molecule type" value="mRNA"/>
</dbReference>
<dbReference type="RefSeq" id="NP_568171.1">
    <molecule id="Q9FPT1-1"/>
    <property type="nucleotide sequence ID" value="NM_120743.3"/>
</dbReference>
<dbReference type="RefSeq" id="NP_850783.1">
    <molecule id="Q9FPT1-2"/>
    <property type="nucleotide sequence ID" value="NM_180452.1"/>
</dbReference>
<dbReference type="SMR" id="Q9FPT1"/>
<dbReference type="BioGRID" id="15827">
    <property type="interactions" value="6"/>
</dbReference>
<dbReference type="FunCoup" id="Q9FPT1">
    <property type="interactions" value="5384"/>
</dbReference>
<dbReference type="IntAct" id="Q9FPT1">
    <property type="interactions" value="1"/>
</dbReference>
<dbReference type="STRING" id="3702.Q9FPT1"/>
<dbReference type="MEROPS" id="C19.A73"/>
<dbReference type="iPTMnet" id="Q9FPT1"/>
<dbReference type="PaxDb" id="3702-AT5G06600.1"/>
<dbReference type="ProteomicsDB" id="228466">
    <molecule id="Q9FPT1-1"/>
</dbReference>
<dbReference type="EnsemblPlants" id="AT5G06600.1">
    <molecule id="Q9FPT1-1"/>
    <property type="protein sequence ID" value="AT5G06600.1"/>
    <property type="gene ID" value="AT5G06600"/>
</dbReference>
<dbReference type="EnsemblPlants" id="AT5G06600.2">
    <molecule id="Q9FPT1-2"/>
    <property type="protein sequence ID" value="AT5G06600.2"/>
    <property type="gene ID" value="AT5G06600"/>
</dbReference>
<dbReference type="GeneID" id="830548"/>
<dbReference type="Gramene" id="AT5G06600.1">
    <molecule id="Q9FPT1-1"/>
    <property type="protein sequence ID" value="AT5G06600.1"/>
    <property type="gene ID" value="AT5G06600"/>
</dbReference>
<dbReference type="Gramene" id="AT5G06600.2">
    <molecule id="Q9FPT1-2"/>
    <property type="protein sequence ID" value="AT5G06600.2"/>
    <property type="gene ID" value="AT5G06600"/>
</dbReference>
<dbReference type="KEGG" id="ath:AT5G06600"/>
<dbReference type="Araport" id="AT5G06600"/>
<dbReference type="TAIR" id="AT5G06600">
    <property type="gene designation" value="UBP12"/>
</dbReference>
<dbReference type="eggNOG" id="KOG1863">
    <property type="taxonomic scope" value="Eukaryota"/>
</dbReference>
<dbReference type="InParanoid" id="Q9FPT1"/>
<dbReference type="OMA" id="HTAHHRF"/>
<dbReference type="PhylomeDB" id="Q9FPT1"/>
<dbReference type="PRO" id="PR:Q9FPT1"/>
<dbReference type="Proteomes" id="UP000006548">
    <property type="component" value="Chromosome 5"/>
</dbReference>
<dbReference type="ExpressionAtlas" id="Q9FPT1">
    <property type="expression patterns" value="baseline and differential"/>
</dbReference>
<dbReference type="GO" id="GO:0005737">
    <property type="term" value="C:cytoplasm"/>
    <property type="evidence" value="ECO:0000353"/>
    <property type="project" value="TAIR"/>
</dbReference>
<dbReference type="GO" id="GO:0005829">
    <property type="term" value="C:cytosol"/>
    <property type="evidence" value="ECO:0007005"/>
    <property type="project" value="TAIR"/>
</dbReference>
<dbReference type="GO" id="GO:0005634">
    <property type="term" value="C:nucleus"/>
    <property type="evidence" value="ECO:0000353"/>
    <property type="project" value="TAIR"/>
</dbReference>
<dbReference type="GO" id="GO:0004843">
    <property type="term" value="F:cysteine-type deubiquitinase activity"/>
    <property type="evidence" value="ECO:0000314"/>
    <property type="project" value="TAIR"/>
</dbReference>
<dbReference type="GO" id="GO:0009867">
    <property type="term" value="P:jasmonic acid mediated signaling pathway"/>
    <property type="evidence" value="ECO:0000315"/>
    <property type="project" value="TAIR"/>
</dbReference>
<dbReference type="GO" id="GO:0010078">
    <property type="term" value="P:maintenance of root meristem identity"/>
    <property type="evidence" value="ECO:0000315"/>
    <property type="project" value="UniProtKB"/>
</dbReference>
<dbReference type="GO" id="GO:0016579">
    <property type="term" value="P:protein deubiquitination"/>
    <property type="evidence" value="ECO:0000314"/>
    <property type="project" value="TAIR"/>
</dbReference>
<dbReference type="GO" id="GO:0070646">
    <property type="term" value="P:protein modification by small protein removal"/>
    <property type="evidence" value="ECO:0000315"/>
    <property type="project" value="UniProtKB"/>
</dbReference>
<dbReference type="GO" id="GO:0006508">
    <property type="term" value="P:proteolysis"/>
    <property type="evidence" value="ECO:0007669"/>
    <property type="project" value="UniProtKB-KW"/>
</dbReference>
<dbReference type="GO" id="GO:0031647">
    <property type="term" value="P:regulation of protein stability"/>
    <property type="evidence" value="ECO:0000315"/>
    <property type="project" value="UniProtKB"/>
</dbReference>
<dbReference type="GO" id="GO:2000280">
    <property type="term" value="P:regulation of root development"/>
    <property type="evidence" value="ECO:0000315"/>
    <property type="project" value="UniProtKB"/>
</dbReference>
<dbReference type="CDD" id="cd00121">
    <property type="entry name" value="MATH"/>
    <property type="match status" value="1"/>
</dbReference>
<dbReference type="CDD" id="cd02659">
    <property type="entry name" value="peptidase_C19C"/>
    <property type="match status" value="1"/>
</dbReference>
<dbReference type="FunFam" id="2.60.210.10:FF:000005">
    <property type="entry name" value="Ubiquitin carboxyl-terminal hydrolase 13"/>
    <property type="match status" value="1"/>
</dbReference>
<dbReference type="FunFam" id="3.10.20.90:FF:000034">
    <property type="entry name" value="Ubiquitin carboxyl-terminal hydrolase 13"/>
    <property type="match status" value="1"/>
</dbReference>
<dbReference type="FunFam" id="3.10.20.90:FF:000050">
    <property type="entry name" value="Ubiquitin carboxyl-terminal hydrolase 13"/>
    <property type="match status" value="1"/>
</dbReference>
<dbReference type="FunFam" id="3.90.70.10:FF:000002">
    <property type="entry name" value="Ubiquitin carboxyl-terminal hydrolase 13"/>
    <property type="match status" value="1"/>
</dbReference>
<dbReference type="Gene3D" id="2.60.210.10">
    <property type="entry name" value="Apoptosis, Tumor Necrosis Factor Receptor Associated Protein 2, Chain A"/>
    <property type="match status" value="1"/>
</dbReference>
<dbReference type="Gene3D" id="3.90.70.10">
    <property type="entry name" value="Cysteine proteinases"/>
    <property type="match status" value="1"/>
</dbReference>
<dbReference type="Gene3D" id="3.10.20.90">
    <property type="entry name" value="Phosphatidylinositol 3-kinase Catalytic Subunit, Chain A, domain 1"/>
    <property type="match status" value="2"/>
</dbReference>
<dbReference type="InterPro" id="IPR002083">
    <property type="entry name" value="MATH/TRAF_dom"/>
</dbReference>
<dbReference type="InterPro" id="IPR038765">
    <property type="entry name" value="Papain-like_cys_pep_sf"/>
</dbReference>
<dbReference type="InterPro" id="IPR050164">
    <property type="entry name" value="Peptidase_C19"/>
</dbReference>
<dbReference type="InterPro" id="IPR001394">
    <property type="entry name" value="Peptidase_C19_UCH"/>
</dbReference>
<dbReference type="InterPro" id="IPR008974">
    <property type="entry name" value="TRAF-like"/>
</dbReference>
<dbReference type="InterPro" id="IPR024729">
    <property type="entry name" value="USP7_ICP0-binding_dom"/>
</dbReference>
<dbReference type="InterPro" id="IPR029346">
    <property type="entry name" value="USP_C"/>
</dbReference>
<dbReference type="InterPro" id="IPR018200">
    <property type="entry name" value="USP_CS"/>
</dbReference>
<dbReference type="InterPro" id="IPR028889">
    <property type="entry name" value="USP_dom"/>
</dbReference>
<dbReference type="PANTHER" id="PTHR24006:SF942">
    <property type="entry name" value="UBIQUITIN C-TERMINAL HYDROLASE 12"/>
    <property type="match status" value="1"/>
</dbReference>
<dbReference type="PANTHER" id="PTHR24006">
    <property type="entry name" value="UBIQUITIN CARBOXYL-TERMINAL HYDROLASE"/>
    <property type="match status" value="1"/>
</dbReference>
<dbReference type="Pfam" id="PF22486">
    <property type="entry name" value="MATH_2"/>
    <property type="match status" value="1"/>
</dbReference>
<dbReference type="Pfam" id="PF00443">
    <property type="entry name" value="UCH"/>
    <property type="match status" value="1"/>
</dbReference>
<dbReference type="Pfam" id="PF14533">
    <property type="entry name" value="USP7_C2"/>
    <property type="match status" value="1"/>
</dbReference>
<dbReference type="Pfam" id="PF12436">
    <property type="entry name" value="USP7_ICP0_bdg"/>
    <property type="match status" value="1"/>
</dbReference>
<dbReference type="SMART" id="SM00061">
    <property type="entry name" value="MATH"/>
    <property type="match status" value="1"/>
</dbReference>
<dbReference type="SUPFAM" id="SSF54001">
    <property type="entry name" value="Cysteine proteinases"/>
    <property type="match status" value="1"/>
</dbReference>
<dbReference type="SUPFAM" id="SSF49599">
    <property type="entry name" value="TRAF domain-like"/>
    <property type="match status" value="1"/>
</dbReference>
<dbReference type="PROSITE" id="PS50144">
    <property type="entry name" value="MATH"/>
    <property type="match status" value="1"/>
</dbReference>
<dbReference type="PROSITE" id="PS00972">
    <property type="entry name" value="USP_1"/>
    <property type="match status" value="1"/>
</dbReference>
<dbReference type="PROSITE" id="PS00973">
    <property type="entry name" value="USP_2"/>
    <property type="match status" value="1"/>
</dbReference>
<dbReference type="PROSITE" id="PS50235">
    <property type="entry name" value="USP_3"/>
    <property type="match status" value="1"/>
</dbReference>
<keyword id="KW-0025">Alternative splicing</keyword>
<keyword id="KW-0378">Hydrolase</keyword>
<keyword id="KW-0645">Protease</keyword>
<keyword id="KW-1185">Reference proteome</keyword>
<keyword id="KW-0788">Thiol protease</keyword>
<keyword id="KW-0833">Ubl conjugation pathway</keyword>
<accession>Q9FPT1</accession>
<accession>Q9C5K1</accession>
<accession>Q9FG10</accession>
<feature type="chain" id="PRO_0000313039" description="Ubiquitin C-terminal hydrolase 12">
    <location>
        <begin position="1"/>
        <end position="1116"/>
    </location>
</feature>
<feature type="domain" description="MATH" evidence="2">
    <location>
        <begin position="54"/>
        <end position="179"/>
    </location>
</feature>
<feature type="domain" description="USP" evidence="3">
    <location>
        <begin position="199"/>
        <end position="524"/>
    </location>
</feature>
<feature type="region of interest" description="Disordered" evidence="6">
    <location>
        <begin position="1"/>
        <end position="52"/>
    </location>
</feature>
<feature type="compositionally biased region" description="Pro residues" evidence="6">
    <location>
        <begin position="1"/>
        <end position="10"/>
    </location>
</feature>
<feature type="compositionally biased region" description="Polar residues" evidence="6">
    <location>
        <begin position="36"/>
        <end position="46"/>
    </location>
</feature>
<feature type="active site" description="Nucleophile" evidence="3 4 5">
    <location>
        <position position="208"/>
    </location>
</feature>
<feature type="active site" description="Proton acceptor" evidence="3 4 5">
    <location>
        <position position="455"/>
    </location>
</feature>
<feature type="splice variant" id="VSP_029989" description="In isoform 2." evidence="10">
    <location>
        <position position="11"/>
    </location>
</feature>
<feature type="sequence conflict" description="In Ref. 1; AAG42754." evidence="11" ref="1">
    <original>L</original>
    <variation>F</variation>
    <location>
        <position position="840"/>
    </location>
</feature>
<name>UBP12_ARATH</name>
<evidence type="ECO:0000250" key="1">
    <source>
        <dbReference type="UniProtKB" id="Q9FPT5"/>
    </source>
</evidence>
<evidence type="ECO:0000255" key="2">
    <source>
        <dbReference type="PROSITE-ProRule" id="PRU00129"/>
    </source>
</evidence>
<evidence type="ECO:0000255" key="3">
    <source>
        <dbReference type="PROSITE-ProRule" id="PRU01035"/>
    </source>
</evidence>
<evidence type="ECO:0000255" key="4">
    <source>
        <dbReference type="PROSITE-ProRule" id="PRU10092"/>
    </source>
</evidence>
<evidence type="ECO:0000255" key="5">
    <source>
        <dbReference type="PROSITE-ProRule" id="PRU10093"/>
    </source>
</evidence>
<evidence type="ECO:0000256" key="6">
    <source>
        <dbReference type="SAM" id="MobiDB-lite"/>
    </source>
</evidence>
<evidence type="ECO:0000269" key="7">
    <source>
    </source>
</evidence>
<evidence type="ECO:0000269" key="8">
    <source>
    </source>
</evidence>
<evidence type="ECO:0000303" key="9">
    <source>
    </source>
</evidence>
<evidence type="ECO:0000303" key="10">
    <source>
    </source>
</evidence>
<evidence type="ECO:0000305" key="11"/>
<evidence type="ECO:0000312" key="12">
    <source>
        <dbReference type="Araport" id="AT5G06600"/>
    </source>
</evidence>
<evidence type="ECO:0000312" key="13">
    <source>
        <dbReference type="EMBL" id="BAB11409.1"/>
    </source>
</evidence>
<organism>
    <name type="scientific">Arabidopsis thaliana</name>
    <name type="common">Mouse-ear cress</name>
    <dbReference type="NCBI Taxonomy" id="3702"/>
    <lineage>
        <taxon>Eukaryota</taxon>
        <taxon>Viridiplantae</taxon>
        <taxon>Streptophyta</taxon>
        <taxon>Embryophyta</taxon>
        <taxon>Tracheophyta</taxon>
        <taxon>Spermatophyta</taxon>
        <taxon>Magnoliopsida</taxon>
        <taxon>eudicotyledons</taxon>
        <taxon>Gunneridae</taxon>
        <taxon>Pentapetalae</taxon>
        <taxon>rosids</taxon>
        <taxon>malvids</taxon>
        <taxon>Brassicales</taxon>
        <taxon>Brassicaceae</taxon>
        <taxon>Camelineae</taxon>
        <taxon>Arabidopsis</taxon>
    </lineage>
</organism>